<protein>
    <recommendedName>
        <fullName evidence="1">Formate--tetrahydrofolate ligase</fullName>
        <ecNumber evidence="1">6.3.4.3</ecNumber>
    </recommendedName>
    <alternativeName>
        <fullName evidence="1">Formyltetrahydrofolate synthetase</fullName>
        <shortName evidence="1">FHS</shortName>
        <shortName evidence="1">FTHFS</shortName>
    </alternativeName>
</protein>
<comment type="catalytic activity">
    <reaction evidence="1">
        <text>(6S)-5,6,7,8-tetrahydrofolate + formate + ATP = (6R)-10-formyltetrahydrofolate + ADP + phosphate</text>
        <dbReference type="Rhea" id="RHEA:20221"/>
        <dbReference type="ChEBI" id="CHEBI:15740"/>
        <dbReference type="ChEBI" id="CHEBI:30616"/>
        <dbReference type="ChEBI" id="CHEBI:43474"/>
        <dbReference type="ChEBI" id="CHEBI:57453"/>
        <dbReference type="ChEBI" id="CHEBI:195366"/>
        <dbReference type="ChEBI" id="CHEBI:456216"/>
        <dbReference type="EC" id="6.3.4.3"/>
    </reaction>
</comment>
<comment type="pathway">
    <text evidence="1">One-carbon metabolism; tetrahydrofolate interconversion.</text>
</comment>
<comment type="similarity">
    <text evidence="1">Belongs to the formate--tetrahydrofolate ligase family.</text>
</comment>
<keyword id="KW-0067">ATP-binding</keyword>
<keyword id="KW-0436">Ligase</keyword>
<keyword id="KW-0547">Nucleotide-binding</keyword>
<keyword id="KW-0554">One-carbon metabolism</keyword>
<reference key="1">
    <citation type="submission" date="2008-01" db="EMBL/GenBank/DDBJ databases">
        <title>Complete sequence of Shewanella halifaxensis HAW-EB4.</title>
        <authorList>
            <consortium name="US DOE Joint Genome Institute"/>
            <person name="Copeland A."/>
            <person name="Lucas S."/>
            <person name="Lapidus A."/>
            <person name="Glavina del Rio T."/>
            <person name="Dalin E."/>
            <person name="Tice H."/>
            <person name="Bruce D."/>
            <person name="Goodwin L."/>
            <person name="Pitluck S."/>
            <person name="Sims D."/>
            <person name="Brettin T."/>
            <person name="Detter J.C."/>
            <person name="Han C."/>
            <person name="Kuske C.R."/>
            <person name="Schmutz J."/>
            <person name="Larimer F."/>
            <person name="Land M."/>
            <person name="Hauser L."/>
            <person name="Kyrpides N."/>
            <person name="Kim E."/>
            <person name="Zhao J.-S."/>
            <person name="Richardson P."/>
        </authorList>
    </citation>
    <scope>NUCLEOTIDE SEQUENCE [LARGE SCALE GENOMIC DNA]</scope>
    <source>
        <strain>HAW-EB4</strain>
    </source>
</reference>
<dbReference type="EC" id="6.3.4.3" evidence="1"/>
<dbReference type="EMBL" id="CP000931">
    <property type="protein sequence ID" value="ABZ78346.1"/>
    <property type="molecule type" value="Genomic_DNA"/>
</dbReference>
<dbReference type="RefSeq" id="WP_012278864.1">
    <property type="nucleotide sequence ID" value="NC_010334.1"/>
</dbReference>
<dbReference type="SMR" id="B0TVP3"/>
<dbReference type="STRING" id="458817.Shal_3806"/>
<dbReference type="KEGG" id="shl:Shal_3806"/>
<dbReference type="eggNOG" id="COG2759">
    <property type="taxonomic scope" value="Bacteria"/>
</dbReference>
<dbReference type="HOGENOM" id="CLU_003601_3_3_6"/>
<dbReference type="OrthoDB" id="9761733at2"/>
<dbReference type="UniPathway" id="UPA00193"/>
<dbReference type="Proteomes" id="UP000001317">
    <property type="component" value="Chromosome"/>
</dbReference>
<dbReference type="GO" id="GO:0005524">
    <property type="term" value="F:ATP binding"/>
    <property type="evidence" value="ECO:0007669"/>
    <property type="project" value="UniProtKB-UniRule"/>
</dbReference>
<dbReference type="GO" id="GO:0004329">
    <property type="term" value="F:formate-tetrahydrofolate ligase activity"/>
    <property type="evidence" value="ECO:0007669"/>
    <property type="project" value="UniProtKB-UniRule"/>
</dbReference>
<dbReference type="GO" id="GO:0035999">
    <property type="term" value="P:tetrahydrofolate interconversion"/>
    <property type="evidence" value="ECO:0007669"/>
    <property type="project" value="UniProtKB-UniRule"/>
</dbReference>
<dbReference type="CDD" id="cd00477">
    <property type="entry name" value="FTHFS"/>
    <property type="match status" value="1"/>
</dbReference>
<dbReference type="FunFam" id="3.10.410.10:FF:000001">
    <property type="entry name" value="Putative formate--tetrahydrofolate ligase"/>
    <property type="match status" value="1"/>
</dbReference>
<dbReference type="Gene3D" id="3.30.1510.10">
    <property type="entry name" value="Domain 2, N(10)-formyltetrahydrofolate synthetase"/>
    <property type="match status" value="1"/>
</dbReference>
<dbReference type="Gene3D" id="3.10.410.10">
    <property type="entry name" value="Formyltetrahydrofolate synthetase, domain 3"/>
    <property type="match status" value="1"/>
</dbReference>
<dbReference type="Gene3D" id="3.40.50.300">
    <property type="entry name" value="P-loop containing nucleotide triphosphate hydrolases"/>
    <property type="match status" value="1"/>
</dbReference>
<dbReference type="HAMAP" id="MF_01543">
    <property type="entry name" value="FTHFS"/>
    <property type="match status" value="1"/>
</dbReference>
<dbReference type="InterPro" id="IPR000559">
    <property type="entry name" value="Formate_THF_ligase"/>
</dbReference>
<dbReference type="InterPro" id="IPR027417">
    <property type="entry name" value="P-loop_NTPase"/>
</dbReference>
<dbReference type="NCBIfam" id="NF010030">
    <property type="entry name" value="PRK13505.1"/>
    <property type="match status" value="1"/>
</dbReference>
<dbReference type="NCBIfam" id="NF010031">
    <property type="entry name" value="PRK13506.1"/>
    <property type="match status" value="1"/>
</dbReference>
<dbReference type="Pfam" id="PF01268">
    <property type="entry name" value="FTHFS"/>
    <property type="match status" value="1"/>
</dbReference>
<dbReference type="SUPFAM" id="SSF52540">
    <property type="entry name" value="P-loop containing nucleoside triphosphate hydrolases"/>
    <property type="match status" value="1"/>
</dbReference>
<accession>B0TVP3</accession>
<feature type="chain" id="PRO_1000087656" description="Formate--tetrahydrofolate ligase">
    <location>
        <begin position="1"/>
        <end position="570"/>
    </location>
</feature>
<feature type="binding site" evidence="1">
    <location>
        <begin position="65"/>
        <end position="72"/>
    </location>
    <ligand>
        <name>ATP</name>
        <dbReference type="ChEBI" id="CHEBI:30616"/>
    </ligand>
</feature>
<evidence type="ECO:0000255" key="1">
    <source>
        <dbReference type="HAMAP-Rule" id="MF_01543"/>
    </source>
</evidence>
<proteinExistence type="inferred from homology"/>
<sequence>MQSDIEISRQHTCLPITEIAKDLGLNPDEFSPCGVNKAKVSQSVARRLADKKNAKLVIVTAVTPTPFGEGKTVTTIGLTQAMNLNGIKTCACIRQPSMGPVFGTKGGAAGGGYAQVVPMEELNLHLTGDIHAVSSAHNLAAAAIDARLFHEHRLGAEVFAQESGLSALNIDSENILWRRVVDHNERSLRQIKVGYGKVNGPVHESGFDITAASELMAILALSQDLKDLRQRIGRLVLALNTQGEPITAEELGVAGAMTVIMADAIEPTLMQTLSGDPCFIHAGPFANIAHGNSSIIADTIAAKLADVVITEAGFGSDMGFEKFSNIKVRESGYAPSASVVVVTLKALKANSGIESDKDINQPDMERLQAGFANLEWHINNVSQYGVPVVVAINRFPTDTDEELEWLKQAVEQTKAFGSEISEAFGKGAEGATKLADMVYHATQTPSDFKLLYQSDTSLEAKLMTLAEVGYGASSVTLSDKAKSQLHWLTKHNYGQLPICVAKTPMSISHDPSIKGIPTEFELPITELRLNAGAGFVTALVGQVMTMPGLGIKPGYLNVDINDDGEIIGLA</sequence>
<gene>
    <name evidence="1" type="primary">fhs</name>
    <name type="ordered locus">Shal_3806</name>
</gene>
<name>FTHS_SHEHH</name>
<organism>
    <name type="scientific">Shewanella halifaxensis (strain HAW-EB4)</name>
    <dbReference type="NCBI Taxonomy" id="458817"/>
    <lineage>
        <taxon>Bacteria</taxon>
        <taxon>Pseudomonadati</taxon>
        <taxon>Pseudomonadota</taxon>
        <taxon>Gammaproteobacteria</taxon>
        <taxon>Alteromonadales</taxon>
        <taxon>Shewanellaceae</taxon>
        <taxon>Shewanella</taxon>
    </lineage>
</organism>